<sequence>MITDTCILHIEEVLELLPHRFPFLLVDRVLNFEKGKFLRAVKNVSFNEPFFQGHFPGKPIFPGVLILEAMAQATGILAFKSMGKLAPGEFYYFAAIDEARFKRPVQPGDQMILNVEFIKERCGVARFKGIATVNEEMACEASMMCARRKEI</sequence>
<protein>
    <recommendedName>
        <fullName evidence="1">3-hydroxyacyl-[acyl-carrier-protein] dehydratase FabZ</fullName>
        <ecNumber evidence="1">4.2.1.59</ecNumber>
    </recommendedName>
    <alternativeName>
        <fullName evidence="1">(3R)-hydroxymyristoyl-[acyl-carrier-protein] dehydratase</fullName>
        <shortName evidence="1">(3R)-hydroxymyristoyl-ACP dehydrase</shortName>
    </alternativeName>
    <alternativeName>
        <fullName evidence="1">Beta-hydroxyacyl-ACP dehydratase</fullName>
    </alternativeName>
</protein>
<gene>
    <name evidence="1" type="primary">fabZ</name>
    <name type="ordered locus">Bfl282</name>
</gene>
<comment type="function">
    <text evidence="1">Involved in unsaturated fatty acids biosynthesis. Catalyzes the dehydration of short chain beta-hydroxyacyl-ACPs and long chain saturated and unsaturated beta-hydroxyacyl-ACPs.</text>
</comment>
<comment type="catalytic activity">
    <reaction evidence="1">
        <text>a (3R)-hydroxyacyl-[ACP] = a (2E)-enoyl-[ACP] + H2O</text>
        <dbReference type="Rhea" id="RHEA:13097"/>
        <dbReference type="Rhea" id="RHEA-COMP:9925"/>
        <dbReference type="Rhea" id="RHEA-COMP:9945"/>
        <dbReference type="ChEBI" id="CHEBI:15377"/>
        <dbReference type="ChEBI" id="CHEBI:78784"/>
        <dbReference type="ChEBI" id="CHEBI:78827"/>
        <dbReference type="EC" id="4.2.1.59"/>
    </reaction>
</comment>
<comment type="subcellular location">
    <subcellularLocation>
        <location evidence="1">Cytoplasm</location>
    </subcellularLocation>
</comment>
<comment type="similarity">
    <text evidence="1">Belongs to the thioester dehydratase family. FabZ subfamily.</text>
</comment>
<reference key="1">
    <citation type="journal article" date="2003" name="Proc. Natl. Acad. Sci. U.S.A.">
        <title>The genome sequence of Blochmannia floridanus: comparative analysis of reduced genomes.</title>
        <authorList>
            <person name="Gil R."/>
            <person name="Silva F.J."/>
            <person name="Zientz E."/>
            <person name="Delmotte F."/>
            <person name="Gonzalez-Candelas F."/>
            <person name="Latorre A."/>
            <person name="Rausell C."/>
            <person name="Kamerbeek J."/>
            <person name="Gadau J."/>
            <person name="Hoelldobler B."/>
            <person name="van Ham R.C.H.J."/>
            <person name="Gross R."/>
            <person name="Moya A."/>
        </authorList>
    </citation>
    <scope>NUCLEOTIDE SEQUENCE [LARGE SCALE GENOMIC DNA]</scope>
</reference>
<name>FABZ_BLOFL</name>
<proteinExistence type="inferred from homology"/>
<organism>
    <name type="scientific">Blochmanniella floridana</name>
    <dbReference type="NCBI Taxonomy" id="203907"/>
    <lineage>
        <taxon>Bacteria</taxon>
        <taxon>Pseudomonadati</taxon>
        <taxon>Pseudomonadota</taxon>
        <taxon>Gammaproteobacteria</taxon>
        <taxon>Enterobacterales</taxon>
        <taxon>Enterobacteriaceae</taxon>
        <taxon>ant endosymbionts</taxon>
        <taxon>Candidatus Blochmanniella</taxon>
    </lineage>
</organism>
<feature type="chain" id="PRO_0000091659" description="3-hydroxyacyl-[acyl-carrier-protein] dehydratase FabZ">
    <location>
        <begin position="1"/>
        <end position="151"/>
    </location>
</feature>
<feature type="active site" evidence="1">
    <location>
        <position position="54"/>
    </location>
</feature>
<dbReference type="EC" id="4.2.1.59" evidence="1"/>
<dbReference type="EMBL" id="BX248583">
    <property type="protein sequence ID" value="CAD83353.1"/>
    <property type="molecule type" value="Genomic_DNA"/>
</dbReference>
<dbReference type="SMR" id="Q7VRD5"/>
<dbReference type="STRING" id="203907.Bfl282"/>
<dbReference type="KEGG" id="bfl:Bfl282"/>
<dbReference type="eggNOG" id="COG0764">
    <property type="taxonomic scope" value="Bacteria"/>
</dbReference>
<dbReference type="HOGENOM" id="CLU_078912_1_0_6"/>
<dbReference type="OrthoDB" id="9772788at2"/>
<dbReference type="Proteomes" id="UP000002192">
    <property type="component" value="Chromosome"/>
</dbReference>
<dbReference type="GO" id="GO:0005737">
    <property type="term" value="C:cytoplasm"/>
    <property type="evidence" value="ECO:0007669"/>
    <property type="project" value="UniProtKB-SubCell"/>
</dbReference>
<dbReference type="GO" id="GO:0016020">
    <property type="term" value="C:membrane"/>
    <property type="evidence" value="ECO:0007669"/>
    <property type="project" value="GOC"/>
</dbReference>
<dbReference type="GO" id="GO:0019171">
    <property type="term" value="F:(3R)-hydroxyacyl-[acyl-carrier-protein] dehydratase activity"/>
    <property type="evidence" value="ECO:0007669"/>
    <property type="project" value="UniProtKB-EC"/>
</dbReference>
<dbReference type="GO" id="GO:0006633">
    <property type="term" value="P:fatty acid biosynthetic process"/>
    <property type="evidence" value="ECO:0007669"/>
    <property type="project" value="UniProtKB-UniRule"/>
</dbReference>
<dbReference type="GO" id="GO:0009245">
    <property type="term" value="P:lipid A biosynthetic process"/>
    <property type="evidence" value="ECO:0007669"/>
    <property type="project" value="UniProtKB-UniRule"/>
</dbReference>
<dbReference type="CDD" id="cd01288">
    <property type="entry name" value="FabZ"/>
    <property type="match status" value="1"/>
</dbReference>
<dbReference type="FunFam" id="3.10.129.10:FF:000001">
    <property type="entry name" value="3-hydroxyacyl-[acyl-carrier-protein] dehydratase FabZ"/>
    <property type="match status" value="1"/>
</dbReference>
<dbReference type="Gene3D" id="3.10.129.10">
    <property type="entry name" value="Hotdog Thioesterase"/>
    <property type="match status" value="1"/>
</dbReference>
<dbReference type="HAMAP" id="MF_00406">
    <property type="entry name" value="FabZ"/>
    <property type="match status" value="1"/>
</dbReference>
<dbReference type="InterPro" id="IPR013114">
    <property type="entry name" value="FabA_FabZ"/>
</dbReference>
<dbReference type="InterPro" id="IPR010084">
    <property type="entry name" value="FabZ"/>
</dbReference>
<dbReference type="InterPro" id="IPR029069">
    <property type="entry name" value="HotDog_dom_sf"/>
</dbReference>
<dbReference type="NCBIfam" id="TIGR01750">
    <property type="entry name" value="fabZ"/>
    <property type="match status" value="1"/>
</dbReference>
<dbReference type="NCBIfam" id="NF000582">
    <property type="entry name" value="PRK00006.1"/>
    <property type="match status" value="1"/>
</dbReference>
<dbReference type="PANTHER" id="PTHR30272">
    <property type="entry name" value="3-HYDROXYACYL-[ACYL-CARRIER-PROTEIN] DEHYDRATASE"/>
    <property type="match status" value="1"/>
</dbReference>
<dbReference type="PANTHER" id="PTHR30272:SF1">
    <property type="entry name" value="3-HYDROXYACYL-[ACYL-CARRIER-PROTEIN] DEHYDRATASE"/>
    <property type="match status" value="1"/>
</dbReference>
<dbReference type="Pfam" id="PF07977">
    <property type="entry name" value="FabA"/>
    <property type="match status" value="1"/>
</dbReference>
<dbReference type="SUPFAM" id="SSF54637">
    <property type="entry name" value="Thioesterase/thiol ester dehydrase-isomerase"/>
    <property type="match status" value="1"/>
</dbReference>
<keyword id="KW-0963">Cytoplasm</keyword>
<keyword id="KW-0441">Lipid A biosynthesis</keyword>
<keyword id="KW-0444">Lipid biosynthesis</keyword>
<keyword id="KW-0443">Lipid metabolism</keyword>
<keyword id="KW-0456">Lyase</keyword>
<keyword id="KW-1185">Reference proteome</keyword>
<evidence type="ECO:0000255" key="1">
    <source>
        <dbReference type="HAMAP-Rule" id="MF_00406"/>
    </source>
</evidence>
<accession>Q7VRD5</accession>